<gene>
    <name type="primary">gtf2f1</name>
    <name type="synonym">rap74</name>
</gene>
<sequence length="524" mass="58699">MASLGTSGQSVTEYVVRVPRNPSKRYSLMAFNAADKVDFSTWNQARMERDLSAKKMYQEEEMPESGAGSEYNRKQREESRRKKYGIILREFKVDDQPWILRVNGKAGRKYKGVKKGGVTENASYFIFTQCADGAFEAFPVSNWYNFTPVAKHRTLTAEEAEQEWERRNKVLNHFTIMQQRRLKDQVGDEDEDEEGGGKLEKGGKGKKKKKKSDLKIHDLEDDLELSSTESENSDEEGESRKKPQKKVPAKGGKKKKRKSDDEALEDSDDGDFEGQEVDYMSDESSSDEELPGKIKPAKEEEGPKGLDEQSESSEESEEEKAEEEEGEEEKKAPTPQDNKKKKKGDSSDESETSEDSDIDGASSSLFMQKKKTPPKKDKKGGSNSSSRGNSRPGTPSPDTGNTSSTLRAAASKLEQSKRGTVSNTPAAKRLKMEAGPQNTSGKSTPQPQSGKSTPSSGDIQLTEEAVRRYLTRKPMTTKDLLKKFQTKKTGLSSEQTVNVLAQILKRLNPDRKVVHDKMHFYLKE</sequence>
<feature type="chain" id="PRO_0000211232" description="General transcription factor IIF subunit 1">
    <location>
        <begin position="1"/>
        <end position="524"/>
    </location>
</feature>
<feature type="region of interest" description="Disordered" evidence="2">
    <location>
        <begin position="56"/>
        <end position="76"/>
    </location>
</feature>
<feature type="region of interest" description="Disordered" evidence="2">
    <location>
        <begin position="181"/>
        <end position="462"/>
    </location>
</feature>
<feature type="compositionally biased region" description="Basic residues" evidence="2">
    <location>
        <begin position="242"/>
        <end position="257"/>
    </location>
</feature>
<feature type="compositionally biased region" description="Acidic residues" evidence="2">
    <location>
        <begin position="262"/>
        <end position="289"/>
    </location>
</feature>
<feature type="compositionally biased region" description="Basic and acidic residues" evidence="2">
    <location>
        <begin position="290"/>
        <end position="307"/>
    </location>
</feature>
<feature type="compositionally biased region" description="Acidic residues" evidence="2">
    <location>
        <begin position="308"/>
        <end position="327"/>
    </location>
</feature>
<feature type="compositionally biased region" description="Acidic residues" evidence="2">
    <location>
        <begin position="347"/>
        <end position="358"/>
    </location>
</feature>
<feature type="compositionally biased region" description="Basic residues" evidence="2">
    <location>
        <begin position="368"/>
        <end position="378"/>
    </location>
</feature>
<feature type="compositionally biased region" description="Low complexity" evidence="2">
    <location>
        <begin position="381"/>
        <end position="397"/>
    </location>
</feature>
<feature type="compositionally biased region" description="Polar residues" evidence="2">
    <location>
        <begin position="436"/>
        <end position="459"/>
    </location>
</feature>
<organism>
    <name type="scientific">Xenopus laevis</name>
    <name type="common">African clawed frog</name>
    <dbReference type="NCBI Taxonomy" id="8355"/>
    <lineage>
        <taxon>Eukaryota</taxon>
        <taxon>Metazoa</taxon>
        <taxon>Chordata</taxon>
        <taxon>Craniata</taxon>
        <taxon>Vertebrata</taxon>
        <taxon>Euteleostomi</taxon>
        <taxon>Amphibia</taxon>
        <taxon>Batrachia</taxon>
        <taxon>Anura</taxon>
        <taxon>Pipoidea</taxon>
        <taxon>Pipidae</taxon>
        <taxon>Xenopodinae</taxon>
        <taxon>Xenopus</taxon>
        <taxon>Xenopus</taxon>
    </lineage>
</organism>
<keyword id="KW-0238">DNA-binding</keyword>
<keyword id="KW-0539">Nucleus</keyword>
<keyword id="KW-0597">Phosphoprotein</keyword>
<keyword id="KW-1185">Reference proteome</keyword>
<keyword id="KW-0804">Transcription</keyword>
<keyword id="KW-0805">Transcription regulation</keyword>
<keyword id="KW-0808">Transferase</keyword>
<accession>Q04870</accession>
<accession>Q6IRR6</accession>
<protein>
    <recommendedName>
        <fullName>General transcription factor IIF subunit 1</fullName>
    </recommendedName>
    <alternativeName>
        <fullName>Transcription initiation factor IIF subunit alpha</fullName>
        <shortName>TFIIF-alpha</shortName>
    </alternativeName>
    <alternativeName>
        <fullName>Transcription initiation factor RAP74</fullName>
    </alternativeName>
</protein>
<evidence type="ECO:0000250" key="1"/>
<evidence type="ECO:0000256" key="2">
    <source>
        <dbReference type="SAM" id="MobiDB-lite"/>
    </source>
</evidence>
<evidence type="ECO:0000305" key="3"/>
<proteinExistence type="evidence at transcript level"/>
<reference key="1">
    <citation type="journal article" date="1992" name="Nucleic Acids Res.">
        <title>Elucidation of three putative structural subdomains by comparison of primary structure of Xenopus and human RAP74.</title>
        <authorList>
            <person name="Gong D.-W."/>
            <person name="Hasegawa S."/>
            <person name="Wada K."/>
            <person name="Roeder R.G."/>
            <person name="Nakatani Y."/>
            <person name="Horikoshi M."/>
        </authorList>
    </citation>
    <scope>NUCLEOTIDE SEQUENCE [MRNA]</scope>
</reference>
<reference key="2">
    <citation type="submission" date="2004-05" db="EMBL/GenBank/DDBJ databases">
        <authorList>
            <consortium name="NIH - Xenopus Gene Collection (XGC) project"/>
        </authorList>
    </citation>
    <scope>NUCLEOTIDE SEQUENCE [LARGE SCALE MRNA]</scope>
    <source>
        <tissue>Embryo</tissue>
    </source>
</reference>
<dbReference type="EMBL" id="Z17426">
    <property type="protein sequence ID" value="CAA78999.1"/>
    <property type="molecule type" value="mRNA"/>
</dbReference>
<dbReference type="EMBL" id="BC070569">
    <property type="protein sequence ID" value="AAH70569.1"/>
    <property type="molecule type" value="mRNA"/>
</dbReference>
<dbReference type="PIR" id="S35551">
    <property type="entry name" value="S35551"/>
</dbReference>
<dbReference type="RefSeq" id="NP_001082258.1">
    <property type="nucleotide sequence ID" value="NM_001088789.1"/>
</dbReference>
<dbReference type="RefSeq" id="XP_018106308.1">
    <property type="nucleotide sequence ID" value="XM_018250819.1"/>
</dbReference>
<dbReference type="RefSeq" id="XP_018106309.1">
    <property type="nucleotide sequence ID" value="XM_018250820.1"/>
</dbReference>
<dbReference type="SMR" id="Q04870"/>
<dbReference type="DNASU" id="398325"/>
<dbReference type="GeneID" id="398325"/>
<dbReference type="KEGG" id="xla:398325"/>
<dbReference type="AGR" id="Xenbase:XB-GENE-974839"/>
<dbReference type="CTD" id="398325"/>
<dbReference type="Xenbase" id="XB-GENE-974839">
    <property type="gene designation" value="gtf2f1.L"/>
</dbReference>
<dbReference type="OMA" id="MERENNQ"/>
<dbReference type="OrthoDB" id="76676at2759"/>
<dbReference type="Proteomes" id="UP000186698">
    <property type="component" value="Chromosome 3L"/>
</dbReference>
<dbReference type="Bgee" id="398325">
    <property type="expression patterns" value="Expressed in egg cell and 19 other cell types or tissues"/>
</dbReference>
<dbReference type="GO" id="GO:0005674">
    <property type="term" value="C:transcription factor TFIIF complex"/>
    <property type="evidence" value="ECO:0000318"/>
    <property type="project" value="GO_Central"/>
</dbReference>
<dbReference type="GO" id="GO:0003677">
    <property type="term" value="F:DNA binding"/>
    <property type="evidence" value="ECO:0007669"/>
    <property type="project" value="UniProtKB-KW"/>
</dbReference>
<dbReference type="GO" id="GO:1990841">
    <property type="term" value="F:promoter-specific chromatin binding"/>
    <property type="evidence" value="ECO:0000250"/>
    <property type="project" value="UniProtKB"/>
</dbReference>
<dbReference type="GO" id="GO:0016251">
    <property type="term" value="F:RNA polymerase II general transcription initiation factor activity"/>
    <property type="evidence" value="ECO:0000318"/>
    <property type="project" value="GO_Central"/>
</dbReference>
<dbReference type="GO" id="GO:0001096">
    <property type="term" value="F:TFIIF-class transcription factor complex binding"/>
    <property type="evidence" value="ECO:0000318"/>
    <property type="project" value="GO_Central"/>
</dbReference>
<dbReference type="GO" id="GO:0016740">
    <property type="term" value="F:transferase activity"/>
    <property type="evidence" value="ECO:0007669"/>
    <property type="project" value="UniProtKB-KW"/>
</dbReference>
<dbReference type="GO" id="GO:0032091">
    <property type="term" value="P:negative regulation of protein binding"/>
    <property type="evidence" value="ECO:0000250"/>
    <property type="project" value="UniProtKB"/>
</dbReference>
<dbReference type="GO" id="GO:0045944">
    <property type="term" value="P:positive regulation of transcription by RNA polymerase II"/>
    <property type="evidence" value="ECO:0000250"/>
    <property type="project" value="UniProtKB"/>
</dbReference>
<dbReference type="GO" id="GO:0032968">
    <property type="term" value="P:positive regulation of transcription elongation by RNA polymerase II"/>
    <property type="evidence" value="ECO:0007669"/>
    <property type="project" value="InterPro"/>
</dbReference>
<dbReference type="GO" id="GO:0006367">
    <property type="term" value="P:transcription initiation at RNA polymerase II promoter"/>
    <property type="evidence" value="ECO:0000318"/>
    <property type="project" value="GO_Central"/>
</dbReference>
<dbReference type="CDD" id="cd00240">
    <property type="entry name" value="TFIIFa"/>
    <property type="match status" value="1"/>
</dbReference>
<dbReference type="FunFam" id="1.10.10.10:FF:000290">
    <property type="entry name" value="General transcription factor IIF subunit 1"/>
    <property type="match status" value="1"/>
</dbReference>
<dbReference type="Gene3D" id="1.10.10.10">
    <property type="entry name" value="Winged helix-like DNA-binding domain superfamily/Winged helix DNA-binding domain"/>
    <property type="match status" value="1"/>
</dbReference>
<dbReference type="InterPro" id="IPR008851">
    <property type="entry name" value="TFIIF-alpha"/>
</dbReference>
<dbReference type="InterPro" id="IPR011039">
    <property type="entry name" value="TFIIF_interaction"/>
</dbReference>
<dbReference type="InterPro" id="IPR036388">
    <property type="entry name" value="WH-like_DNA-bd_sf"/>
</dbReference>
<dbReference type="InterPro" id="IPR036390">
    <property type="entry name" value="WH_DNA-bd_sf"/>
</dbReference>
<dbReference type="PANTHER" id="PTHR13011:SF0">
    <property type="entry name" value="GENERAL TRANSCRIPTION FACTOR IIF SUBUNIT 1"/>
    <property type="match status" value="1"/>
</dbReference>
<dbReference type="PANTHER" id="PTHR13011">
    <property type="entry name" value="TFIIF-ALPHA"/>
    <property type="match status" value="1"/>
</dbReference>
<dbReference type="Pfam" id="PF05793">
    <property type="entry name" value="TFIIF_alpha"/>
    <property type="match status" value="1"/>
</dbReference>
<dbReference type="SUPFAM" id="SSF50916">
    <property type="entry name" value="Rap30/74 interaction domains"/>
    <property type="match status" value="1"/>
</dbReference>
<dbReference type="SUPFAM" id="SSF46785">
    <property type="entry name" value="Winged helix' DNA-binding domain"/>
    <property type="match status" value="1"/>
</dbReference>
<name>T2FA_XENLA</name>
<comment type="function">
    <text>TFIIF is a general transcription initiation factor that binds to RNA polymerase II and helps to recruit it to the initiation complex in collaboration with TFIIB. It promotes transcription elongation.</text>
</comment>
<comment type="subunit">
    <text>Heterodimer of an alpha and a beta subunit.</text>
</comment>
<comment type="subcellular location">
    <subcellularLocation>
        <location>Nucleus</location>
    </subcellularLocation>
</comment>
<comment type="PTM">
    <text evidence="1">Phosphorylated on Ser and other residues by TAF1 and casein kinase II-like kinases.</text>
</comment>
<comment type="similarity">
    <text evidence="3">Belongs to the TFIIF alpha subunit family.</text>
</comment>